<accession>Q2SJP9</accession>
<sequence>MDKVKKSDQEWRQQLTDEQYRVTRGKGTERPFTGEYYDTKEAGVYVCVCCGEPLFTSENKYDSGCGWPSFWAPMDKEKITEEIDMSHMMVRTEILCSKCDAHLGHVFDDGPQPTGQRYCVNSASLRFHSADGDAKQEDE</sequence>
<reference key="1">
    <citation type="journal article" date="2005" name="Nucleic Acids Res.">
        <title>Genomic blueprint of Hahella chejuensis, a marine microbe producing an algicidal agent.</title>
        <authorList>
            <person name="Jeong H."/>
            <person name="Yim J.H."/>
            <person name="Lee C."/>
            <person name="Choi S.-H."/>
            <person name="Park Y.K."/>
            <person name="Yoon S.H."/>
            <person name="Hur C.-G."/>
            <person name="Kang H.-Y."/>
            <person name="Kim D."/>
            <person name="Lee H.H."/>
            <person name="Park K.H."/>
            <person name="Park S.-H."/>
            <person name="Park H.-S."/>
            <person name="Lee H.K."/>
            <person name="Oh T.K."/>
            <person name="Kim J.F."/>
        </authorList>
    </citation>
    <scope>NUCLEOTIDE SEQUENCE [LARGE SCALE GENOMIC DNA]</scope>
    <source>
        <strain>KCTC 2396</strain>
    </source>
</reference>
<proteinExistence type="inferred from homology"/>
<keyword id="KW-0479">Metal-binding</keyword>
<keyword id="KW-0560">Oxidoreductase</keyword>
<keyword id="KW-1185">Reference proteome</keyword>
<keyword id="KW-0862">Zinc</keyword>
<evidence type="ECO:0000255" key="1">
    <source>
        <dbReference type="HAMAP-Rule" id="MF_01400"/>
    </source>
</evidence>
<evidence type="ECO:0000255" key="2">
    <source>
        <dbReference type="PROSITE-ProRule" id="PRU01126"/>
    </source>
</evidence>
<comment type="catalytic activity">
    <reaction evidence="1">
        <text>L-methionyl-[protein] + [thioredoxin]-disulfide + H2O = L-methionyl-(R)-S-oxide-[protein] + [thioredoxin]-dithiol</text>
        <dbReference type="Rhea" id="RHEA:24164"/>
        <dbReference type="Rhea" id="RHEA-COMP:10698"/>
        <dbReference type="Rhea" id="RHEA-COMP:10700"/>
        <dbReference type="Rhea" id="RHEA-COMP:12313"/>
        <dbReference type="Rhea" id="RHEA-COMP:12314"/>
        <dbReference type="ChEBI" id="CHEBI:15377"/>
        <dbReference type="ChEBI" id="CHEBI:16044"/>
        <dbReference type="ChEBI" id="CHEBI:29950"/>
        <dbReference type="ChEBI" id="CHEBI:45764"/>
        <dbReference type="ChEBI" id="CHEBI:50058"/>
        <dbReference type="EC" id="1.8.4.12"/>
    </reaction>
</comment>
<comment type="cofactor">
    <cofactor evidence="1">
        <name>Zn(2+)</name>
        <dbReference type="ChEBI" id="CHEBI:29105"/>
    </cofactor>
    <text evidence="1">Binds 1 zinc ion per subunit. The zinc ion is important for the structural integrity of the protein.</text>
</comment>
<comment type="similarity">
    <text evidence="1">Belongs to the MsrB Met sulfoxide reductase family.</text>
</comment>
<name>MSRB_HAHCH</name>
<protein>
    <recommendedName>
        <fullName evidence="1">Peptide methionine sulfoxide reductase MsrB</fullName>
        <ecNumber evidence="1">1.8.4.12</ecNumber>
    </recommendedName>
    <alternativeName>
        <fullName evidence="1">Peptide-methionine (R)-S-oxide reductase</fullName>
    </alternativeName>
</protein>
<feature type="chain" id="PRO_1000068272" description="Peptide methionine sulfoxide reductase MsrB">
    <location>
        <begin position="1"/>
        <end position="139"/>
    </location>
</feature>
<feature type="domain" description="MsrB" evidence="2">
    <location>
        <begin position="8"/>
        <end position="130"/>
    </location>
</feature>
<feature type="active site" description="Nucleophile" evidence="2">
    <location>
        <position position="119"/>
    </location>
</feature>
<feature type="binding site" evidence="2">
    <location>
        <position position="47"/>
    </location>
    <ligand>
        <name>Zn(2+)</name>
        <dbReference type="ChEBI" id="CHEBI:29105"/>
    </ligand>
</feature>
<feature type="binding site" evidence="2">
    <location>
        <position position="50"/>
    </location>
    <ligand>
        <name>Zn(2+)</name>
        <dbReference type="ChEBI" id="CHEBI:29105"/>
    </ligand>
</feature>
<feature type="binding site" evidence="2">
    <location>
        <position position="96"/>
    </location>
    <ligand>
        <name>Zn(2+)</name>
        <dbReference type="ChEBI" id="CHEBI:29105"/>
    </ligand>
</feature>
<feature type="binding site" evidence="2">
    <location>
        <position position="99"/>
    </location>
    <ligand>
        <name>Zn(2+)</name>
        <dbReference type="ChEBI" id="CHEBI:29105"/>
    </ligand>
</feature>
<gene>
    <name evidence="1" type="primary">msrB</name>
    <name type="ordered locus">HCH_02302</name>
</gene>
<organism>
    <name type="scientific">Hahella chejuensis (strain KCTC 2396)</name>
    <dbReference type="NCBI Taxonomy" id="349521"/>
    <lineage>
        <taxon>Bacteria</taxon>
        <taxon>Pseudomonadati</taxon>
        <taxon>Pseudomonadota</taxon>
        <taxon>Gammaproteobacteria</taxon>
        <taxon>Oceanospirillales</taxon>
        <taxon>Hahellaceae</taxon>
        <taxon>Hahella</taxon>
    </lineage>
</organism>
<dbReference type="EC" id="1.8.4.12" evidence="1"/>
<dbReference type="EMBL" id="CP000155">
    <property type="protein sequence ID" value="ABC29125.1"/>
    <property type="molecule type" value="Genomic_DNA"/>
</dbReference>
<dbReference type="RefSeq" id="WP_011396194.1">
    <property type="nucleotide sequence ID" value="NC_007645.1"/>
</dbReference>
<dbReference type="SMR" id="Q2SJP9"/>
<dbReference type="STRING" id="349521.HCH_02302"/>
<dbReference type="KEGG" id="hch:HCH_02302"/>
<dbReference type="eggNOG" id="COG0229">
    <property type="taxonomic scope" value="Bacteria"/>
</dbReference>
<dbReference type="HOGENOM" id="CLU_031040_8_5_6"/>
<dbReference type="OrthoDB" id="9785497at2"/>
<dbReference type="Proteomes" id="UP000000238">
    <property type="component" value="Chromosome"/>
</dbReference>
<dbReference type="GO" id="GO:0005737">
    <property type="term" value="C:cytoplasm"/>
    <property type="evidence" value="ECO:0007669"/>
    <property type="project" value="TreeGrafter"/>
</dbReference>
<dbReference type="GO" id="GO:0033743">
    <property type="term" value="F:peptide-methionine (R)-S-oxide reductase activity"/>
    <property type="evidence" value="ECO:0007669"/>
    <property type="project" value="UniProtKB-UniRule"/>
</dbReference>
<dbReference type="GO" id="GO:0008270">
    <property type="term" value="F:zinc ion binding"/>
    <property type="evidence" value="ECO:0007669"/>
    <property type="project" value="UniProtKB-UniRule"/>
</dbReference>
<dbReference type="GO" id="GO:0030091">
    <property type="term" value="P:protein repair"/>
    <property type="evidence" value="ECO:0007669"/>
    <property type="project" value="InterPro"/>
</dbReference>
<dbReference type="GO" id="GO:0006979">
    <property type="term" value="P:response to oxidative stress"/>
    <property type="evidence" value="ECO:0007669"/>
    <property type="project" value="InterPro"/>
</dbReference>
<dbReference type="FunFam" id="2.170.150.20:FF:000001">
    <property type="entry name" value="Peptide methionine sulfoxide reductase MsrB"/>
    <property type="match status" value="1"/>
</dbReference>
<dbReference type="Gene3D" id="2.170.150.20">
    <property type="entry name" value="Peptide methionine sulfoxide reductase"/>
    <property type="match status" value="1"/>
</dbReference>
<dbReference type="HAMAP" id="MF_01400">
    <property type="entry name" value="MsrB"/>
    <property type="match status" value="1"/>
</dbReference>
<dbReference type="InterPro" id="IPR028427">
    <property type="entry name" value="Met_Sox_Rdtase_MsrB"/>
</dbReference>
<dbReference type="InterPro" id="IPR002579">
    <property type="entry name" value="Met_Sox_Rdtase_MsrB_dom"/>
</dbReference>
<dbReference type="InterPro" id="IPR011057">
    <property type="entry name" value="Mss4-like_sf"/>
</dbReference>
<dbReference type="NCBIfam" id="TIGR00357">
    <property type="entry name" value="peptide-methionine (R)-S-oxide reductase MsrB"/>
    <property type="match status" value="1"/>
</dbReference>
<dbReference type="PANTHER" id="PTHR10173">
    <property type="entry name" value="METHIONINE SULFOXIDE REDUCTASE"/>
    <property type="match status" value="1"/>
</dbReference>
<dbReference type="PANTHER" id="PTHR10173:SF52">
    <property type="entry name" value="METHIONINE-R-SULFOXIDE REDUCTASE B1"/>
    <property type="match status" value="1"/>
</dbReference>
<dbReference type="Pfam" id="PF01641">
    <property type="entry name" value="SelR"/>
    <property type="match status" value="1"/>
</dbReference>
<dbReference type="SUPFAM" id="SSF51316">
    <property type="entry name" value="Mss4-like"/>
    <property type="match status" value="1"/>
</dbReference>
<dbReference type="PROSITE" id="PS51790">
    <property type="entry name" value="MSRB"/>
    <property type="match status" value="1"/>
</dbReference>